<name>NQRB_STUS1</name>
<gene>
    <name evidence="1" type="primary">nqrB</name>
    <name type="ordered locus">PST_2654</name>
</gene>
<organism>
    <name type="scientific">Stutzerimonas stutzeri (strain A1501)</name>
    <name type="common">Pseudomonas stutzeri</name>
    <dbReference type="NCBI Taxonomy" id="379731"/>
    <lineage>
        <taxon>Bacteria</taxon>
        <taxon>Pseudomonadati</taxon>
        <taxon>Pseudomonadota</taxon>
        <taxon>Gammaproteobacteria</taxon>
        <taxon>Pseudomonadales</taxon>
        <taxon>Pseudomonadaceae</taxon>
        <taxon>Stutzerimonas</taxon>
    </lineage>
</organism>
<reference key="1">
    <citation type="journal article" date="2008" name="Proc. Natl. Acad. Sci. U.S.A.">
        <title>Nitrogen fixation island and rhizosphere competence traits in the genome of root-associated Pseudomonas stutzeri A1501.</title>
        <authorList>
            <person name="Yan Y."/>
            <person name="Yang J."/>
            <person name="Dou Y."/>
            <person name="Chen M."/>
            <person name="Ping S."/>
            <person name="Peng J."/>
            <person name="Lu W."/>
            <person name="Zhang W."/>
            <person name="Yao Z."/>
            <person name="Li H."/>
            <person name="Liu W."/>
            <person name="He S."/>
            <person name="Geng L."/>
            <person name="Zhang X."/>
            <person name="Yang F."/>
            <person name="Yu H."/>
            <person name="Zhan Y."/>
            <person name="Li D."/>
            <person name="Lin Z."/>
            <person name="Wang Y."/>
            <person name="Elmerich C."/>
            <person name="Lin M."/>
            <person name="Jin Q."/>
        </authorList>
    </citation>
    <scope>NUCLEOTIDE SEQUENCE [LARGE SCALE GENOMIC DNA]</scope>
    <source>
        <strain>A1501</strain>
    </source>
</reference>
<accession>A4VMV3</accession>
<dbReference type="EC" id="7.2.1.1" evidence="1"/>
<dbReference type="EMBL" id="CP000304">
    <property type="protein sequence ID" value="ABP80304.1"/>
    <property type="molecule type" value="Genomic_DNA"/>
</dbReference>
<dbReference type="RefSeq" id="WP_011913761.1">
    <property type="nucleotide sequence ID" value="NC_009434.1"/>
</dbReference>
<dbReference type="SMR" id="A4VMV3"/>
<dbReference type="KEGG" id="psa:PST_2654"/>
<dbReference type="eggNOG" id="COG1805">
    <property type="taxonomic scope" value="Bacteria"/>
</dbReference>
<dbReference type="HOGENOM" id="CLU_042020_1_1_6"/>
<dbReference type="Proteomes" id="UP000000233">
    <property type="component" value="Chromosome"/>
</dbReference>
<dbReference type="GO" id="GO:0005886">
    <property type="term" value="C:plasma membrane"/>
    <property type="evidence" value="ECO:0007669"/>
    <property type="project" value="UniProtKB-SubCell"/>
</dbReference>
<dbReference type="GO" id="GO:0010181">
    <property type="term" value="F:FMN binding"/>
    <property type="evidence" value="ECO:0007669"/>
    <property type="project" value="InterPro"/>
</dbReference>
<dbReference type="GO" id="GO:0016655">
    <property type="term" value="F:oxidoreductase activity, acting on NAD(P)H, quinone or similar compound as acceptor"/>
    <property type="evidence" value="ECO:0007669"/>
    <property type="project" value="UniProtKB-UniRule"/>
</dbReference>
<dbReference type="GO" id="GO:0022904">
    <property type="term" value="P:respiratory electron transport chain"/>
    <property type="evidence" value="ECO:0007669"/>
    <property type="project" value="InterPro"/>
</dbReference>
<dbReference type="GO" id="GO:0006814">
    <property type="term" value="P:sodium ion transport"/>
    <property type="evidence" value="ECO:0007669"/>
    <property type="project" value="UniProtKB-UniRule"/>
</dbReference>
<dbReference type="GO" id="GO:0055085">
    <property type="term" value="P:transmembrane transport"/>
    <property type="evidence" value="ECO:0007669"/>
    <property type="project" value="InterPro"/>
</dbReference>
<dbReference type="HAMAP" id="MF_00426">
    <property type="entry name" value="NqrB"/>
    <property type="match status" value="1"/>
</dbReference>
<dbReference type="InterPro" id="IPR010966">
    <property type="entry name" value="NqrB"/>
</dbReference>
<dbReference type="InterPro" id="IPR004338">
    <property type="entry name" value="NqrB/RnfD"/>
</dbReference>
<dbReference type="NCBIfam" id="TIGR01937">
    <property type="entry name" value="nqrB"/>
    <property type="match status" value="1"/>
</dbReference>
<dbReference type="NCBIfam" id="NF003756">
    <property type="entry name" value="PRK05349.1"/>
    <property type="match status" value="1"/>
</dbReference>
<dbReference type="PANTHER" id="PTHR30578">
    <property type="entry name" value="ELECTRON TRANSPORT COMPLEX PROTEIN RNFD"/>
    <property type="match status" value="1"/>
</dbReference>
<dbReference type="PANTHER" id="PTHR30578:SF1">
    <property type="entry name" value="NA(+)-TRANSLOCATING NADH-QUINONE REDUCTASE SUBUNIT B"/>
    <property type="match status" value="1"/>
</dbReference>
<dbReference type="Pfam" id="PF03116">
    <property type="entry name" value="NQR2_RnfD_RnfE"/>
    <property type="match status" value="1"/>
</dbReference>
<dbReference type="PIRSF" id="PIRSF016055">
    <property type="entry name" value="NADH-UbQ_OxRdtase_B_su"/>
    <property type="match status" value="1"/>
</dbReference>
<proteinExistence type="inferred from homology"/>
<evidence type="ECO:0000255" key="1">
    <source>
        <dbReference type="HAMAP-Rule" id="MF_00426"/>
    </source>
</evidence>
<feature type="chain" id="PRO_1000060146" description="Na(+)-translocating NADH-quinone reductase subunit B">
    <location>
        <begin position="1"/>
        <end position="403"/>
    </location>
</feature>
<feature type="transmembrane region" description="Helical" evidence="1">
    <location>
        <begin position="56"/>
        <end position="76"/>
    </location>
</feature>
<feature type="transmembrane region" description="Helical" evidence="1">
    <location>
        <begin position="121"/>
        <end position="141"/>
    </location>
</feature>
<feature type="transmembrane region" description="Helical" evidence="1">
    <location>
        <begin position="163"/>
        <end position="183"/>
    </location>
</feature>
<feature type="transmembrane region" description="Helical" evidence="1">
    <location>
        <begin position="220"/>
        <end position="240"/>
    </location>
</feature>
<feature type="transmembrane region" description="Helical" evidence="1">
    <location>
        <begin position="258"/>
        <end position="278"/>
    </location>
</feature>
<feature type="transmembrane region" description="Helical" evidence="1">
    <location>
        <begin position="287"/>
        <end position="307"/>
    </location>
</feature>
<feature type="transmembrane region" description="Helical" evidence="1">
    <location>
        <begin position="312"/>
        <end position="332"/>
    </location>
</feature>
<feature type="transmembrane region" description="Helical" evidence="1">
    <location>
        <begin position="348"/>
        <end position="368"/>
    </location>
</feature>
<feature type="transmembrane region" description="Helical" evidence="1">
    <location>
        <begin position="371"/>
        <end position="391"/>
    </location>
</feature>
<feature type="modified residue" description="FMN phosphoryl threonine" evidence="1">
    <location>
        <position position="230"/>
    </location>
</feature>
<sequence length="403" mass="44056">MGIRAFLDKIEHHFEKGGKYEKWYALYEAADTFLYRPGSVTKTTAHVRDGIDLKRMMITVWLCTFPAMFFGMWNTGYQANLIYAQSPDLLAAQEGWRFALIGAFAGFDPNSLWDNFIQGAAYFLPIYAVTFIVGGFWEVLFASIRKHEVNEGFFVTSVLFALILPPTIPLWQVALGISFGVVIGKEIFGGTGKNFLNPALTARAFLFFAYPAQMSGDAVWTAVDGYAGATALSLGFAGGIENVISSGITWMDAFVGTIHGSIGETSTLAIFIGGAVLIGSKIASWRIVTGVMLGMIALSTLFNLIGSETNPLFGMPWYWHMVVGGFAFGMIFMATDPVSASMTNTGKWVFGILIGVMVVLIRVVNPAFPEGMMLAILFANLCAPLIDHFVIQANIKRRLARNV</sequence>
<protein>
    <recommendedName>
        <fullName evidence="1">Na(+)-translocating NADH-quinone reductase subunit B</fullName>
        <shortName evidence="1">Na(+)-NQR subunit B</shortName>
        <shortName evidence="1">Na(+)-translocating NQR subunit B</shortName>
        <ecNumber evidence="1">7.2.1.1</ecNumber>
    </recommendedName>
    <alternativeName>
        <fullName evidence="1">NQR complex subunit B</fullName>
    </alternativeName>
    <alternativeName>
        <fullName evidence="1">NQR-1 subunit B</fullName>
    </alternativeName>
</protein>
<keyword id="KW-0997">Cell inner membrane</keyword>
<keyword id="KW-1003">Cell membrane</keyword>
<keyword id="KW-0285">Flavoprotein</keyword>
<keyword id="KW-0288">FMN</keyword>
<keyword id="KW-0406">Ion transport</keyword>
<keyword id="KW-0472">Membrane</keyword>
<keyword id="KW-0520">NAD</keyword>
<keyword id="KW-0597">Phosphoprotein</keyword>
<keyword id="KW-1185">Reference proteome</keyword>
<keyword id="KW-0915">Sodium</keyword>
<keyword id="KW-0739">Sodium transport</keyword>
<keyword id="KW-1278">Translocase</keyword>
<keyword id="KW-0812">Transmembrane</keyword>
<keyword id="KW-1133">Transmembrane helix</keyword>
<keyword id="KW-0813">Transport</keyword>
<keyword id="KW-0830">Ubiquinone</keyword>
<comment type="function">
    <text evidence="1">NQR complex catalyzes the reduction of ubiquinone-1 to ubiquinol by two successive reactions, coupled with the transport of Na(+) ions from the cytoplasm to the periplasm. NqrA to NqrE are probably involved in the second step, the conversion of ubisemiquinone to ubiquinol.</text>
</comment>
<comment type="catalytic activity">
    <reaction evidence="1">
        <text>a ubiquinone + n Na(+)(in) + NADH + H(+) = a ubiquinol + n Na(+)(out) + NAD(+)</text>
        <dbReference type="Rhea" id="RHEA:47748"/>
        <dbReference type="Rhea" id="RHEA-COMP:9565"/>
        <dbReference type="Rhea" id="RHEA-COMP:9566"/>
        <dbReference type="ChEBI" id="CHEBI:15378"/>
        <dbReference type="ChEBI" id="CHEBI:16389"/>
        <dbReference type="ChEBI" id="CHEBI:17976"/>
        <dbReference type="ChEBI" id="CHEBI:29101"/>
        <dbReference type="ChEBI" id="CHEBI:57540"/>
        <dbReference type="ChEBI" id="CHEBI:57945"/>
        <dbReference type="EC" id="7.2.1.1"/>
    </reaction>
</comment>
<comment type="cofactor">
    <cofactor evidence="1">
        <name>FMN</name>
        <dbReference type="ChEBI" id="CHEBI:58210"/>
    </cofactor>
</comment>
<comment type="subunit">
    <text evidence="1">Composed of six subunits; NqrA, NqrB, NqrC, NqrD, NqrE and NqrF.</text>
</comment>
<comment type="subcellular location">
    <subcellularLocation>
        <location evidence="1">Cell inner membrane</location>
        <topology evidence="1">Multi-pass membrane protein</topology>
    </subcellularLocation>
</comment>
<comment type="similarity">
    <text evidence="1">Belongs to the NqrB/RnfD family.</text>
</comment>